<sequence>MKSRYKRLTSLALSLSMALGISLPAWASPDTSVDNKVNFSTDVIYQIVTDRFADGDRTNNPAGDAFSGDRSNLKLYFGGDWQGIIDKINDGYLTGMGVTALWISQPVENITSVIKYSGVNNTSYHGYWARDFKQTNDAFGDFADFQNLIDTAHAHNIKVVIDFAPNHTSPADRDNPGFAENGGMYDNGSLLGAYSNDTAGLFHHNGGTDFSTIEDGIYKNLYDLADINHNNNAMDAYFKSAIDLWLGMGVDGIRFDAVKHMPFGWQKSFVSSIYGGDHPVFTFGEWYLGADQTDGDNIKFANESGMNLLDFEYAQEVREVFRDKTETMKDLYEVLASTESQYDYINNMVTFIDNHDMDRFQVAGSGTRATEQALALTLTSRGVPAIYYGTEQYMTGDGDPNNRAMMTSFNTGTTAYKVIQALAPLRKSNPAIAYGTTTERWVNNDVLIIERKFGSSAALVAINRNSSAAYPISGLLSSLPAGTYSDVLNGLLNGNSITVGSGGAVTNFTLAAGGTAVWQYTAPETSPAIGNVGPTMGQPGNIVTIDGRGFGGTAGTVYFGTTAVTGSGIVSWEDTQIKAVIPKVAAGKTGVSVKTSSGTASNTFKSFNVLTGDQVTVRFLVNQANTNYGTNVYLVGNAAELGSWDPNKAIGPMYNQVIAKYPSWYYDVSVPAGTKLDFKFIKKGGGTVTWEGGGNHTYTTPASGVGTVTVDWQN</sequence>
<protein>
    <recommendedName>
        <fullName>Cyclomaltodextrin glucanotransferase</fullName>
        <ecNumber>2.4.1.19</ecNumber>
    </recommendedName>
    <alternativeName>
        <fullName>Cyclodextrin-glycosyltransferase</fullName>
        <shortName>CGTase</shortName>
    </alternativeName>
</protein>
<feature type="signal peptide">
    <location>
        <begin position="1"/>
        <end position="27"/>
    </location>
</feature>
<feature type="chain" id="PRO_0000001434" description="Cyclomaltodextrin glucanotransferase">
    <location>
        <begin position="28"/>
        <end position="714"/>
    </location>
</feature>
<feature type="domain" description="IPT/TIG">
    <location>
        <begin position="527"/>
        <end position="607"/>
    </location>
</feature>
<feature type="domain" description="CBM20" evidence="2">
    <location>
        <begin position="609"/>
        <end position="714"/>
    </location>
</feature>
<feature type="region of interest" description="A1">
    <location>
        <begin position="28"/>
        <end position="165"/>
    </location>
</feature>
<feature type="region of interest" description="B">
    <location>
        <begin position="166"/>
        <end position="229"/>
    </location>
</feature>
<feature type="region of interest" description="A2">
    <location>
        <begin position="230"/>
        <end position="434"/>
    </location>
</feature>
<feature type="region of interest" description="C">
    <location>
        <begin position="435"/>
        <end position="523"/>
    </location>
</feature>
<feature type="region of interest" description="D">
    <location>
        <begin position="524"/>
        <end position="610"/>
    </location>
</feature>
<feature type="region of interest" description="E">
    <location>
        <begin position="611"/>
        <end position="714"/>
    </location>
</feature>
<feature type="active site" description="Nucleophile" evidence="1">
    <location>
        <position position="256"/>
    </location>
</feature>
<feature type="active site" description="Proton donor" evidence="1">
    <location>
        <position position="285"/>
    </location>
</feature>
<feature type="binding site" evidence="1">
    <location>
        <position position="54"/>
    </location>
    <ligand>
        <name>Ca(2+)</name>
        <dbReference type="ChEBI" id="CHEBI:29108"/>
        <label>1</label>
    </ligand>
</feature>
<feature type="binding site" evidence="1">
    <location>
        <position position="59"/>
    </location>
    <ligand>
        <name>Ca(2+)</name>
        <dbReference type="ChEBI" id="CHEBI:29108"/>
        <label>1</label>
    </ligand>
</feature>
<feature type="binding site" evidence="1">
    <location>
        <position position="60"/>
    </location>
    <ligand>
        <name>Ca(2+)</name>
        <dbReference type="ChEBI" id="CHEBI:29108"/>
        <label>1</label>
    </ligand>
</feature>
<feature type="binding site" evidence="1">
    <location>
        <position position="78"/>
    </location>
    <ligand>
        <name>Ca(2+)</name>
        <dbReference type="ChEBI" id="CHEBI:29108"/>
        <label>1</label>
    </ligand>
</feature>
<feature type="binding site" evidence="1">
    <location>
        <position position="80"/>
    </location>
    <ligand>
        <name>Ca(2+)</name>
        <dbReference type="ChEBI" id="CHEBI:29108"/>
        <label>1</label>
    </ligand>
</feature>
<feature type="binding site" evidence="1">
    <location>
        <begin position="127"/>
        <end position="128"/>
    </location>
    <ligand>
        <name>substrate</name>
    </ligand>
</feature>
<feature type="binding site" evidence="1">
    <location>
        <position position="166"/>
    </location>
    <ligand>
        <name>Ca(2+)</name>
        <dbReference type="ChEBI" id="CHEBI:29108"/>
        <label>2</label>
    </ligand>
</feature>
<feature type="binding site" evidence="1">
    <location>
        <position position="167"/>
    </location>
    <ligand>
        <name>substrate</name>
    </ligand>
</feature>
<feature type="binding site" evidence="1">
    <location>
        <position position="217"/>
    </location>
    <ligand>
        <name>Ca(2+)</name>
        <dbReference type="ChEBI" id="CHEBI:29108"/>
        <label>2</label>
    </ligand>
</feature>
<feature type="binding site" evidence="1">
    <location>
        <begin position="220"/>
        <end position="223"/>
    </location>
    <ligand>
        <name>substrate</name>
    </ligand>
</feature>
<feature type="binding site" evidence="1">
    <location>
        <position position="226"/>
    </location>
    <ligand>
        <name>Ca(2+)</name>
        <dbReference type="ChEBI" id="CHEBI:29108"/>
        <label>2</label>
    </ligand>
</feature>
<feature type="binding site" evidence="1">
    <location>
        <position position="254"/>
    </location>
    <ligand>
        <name>substrate</name>
    </ligand>
</feature>
<feature type="binding site" evidence="1">
    <location>
        <begin position="259"/>
        <end position="260"/>
    </location>
    <ligand>
        <name>substrate</name>
    </ligand>
</feature>
<feature type="binding site" evidence="1">
    <location>
        <position position="260"/>
    </location>
    <ligand>
        <name>Ca(2+)</name>
        <dbReference type="ChEBI" id="CHEBI:29108"/>
        <label>2</label>
    </ligand>
</feature>
<feature type="binding site" evidence="1">
    <location>
        <position position="355"/>
    </location>
    <ligand>
        <name>substrate</name>
    </ligand>
</feature>
<feature type="binding site" evidence="1">
    <location>
        <position position="399"/>
    </location>
    <ligand>
        <name>substrate</name>
    </ligand>
</feature>
<feature type="binding site" evidence="1">
    <location>
        <position position="403"/>
    </location>
    <ligand>
        <name>substrate</name>
    </ligand>
</feature>
<feature type="site" description="Transition state stabilizer" evidence="1">
    <location>
        <position position="356"/>
    </location>
</feature>
<feature type="sequence conflict" description="In Ref. 2; AAA22298." evidence="3" ref="2">
    <original>AHAHNIKVVIDFAPNHTSPADRD</original>
    <variation>LTLITSRSDRLRPQPHVSGRAGT</variation>
    <location>
        <begin position="152"/>
        <end position="174"/>
    </location>
</feature>
<feature type="sequence conflict" description="In Ref. 2; AAA22298." evidence="3" ref="2">
    <original>GM</original>
    <variation>AL</variation>
    <location>
        <begin position="183"/>
        <end position="184"/>
    </location>
</feature>
<feature type="sequence conflict" description="In Ref. 2; AAA22298." evidence="3" ref="2">
    <original>HM</original>
    <variation>QY</variation>
    <location>
        <begin position="260"/>
        <end position="261"/>
    </location>
</feature>
<feature type="sequence conflict" description="In Ref. 2; AAA22298." evidence="3" ref="2">
    <original>S</original>
    <variation>T</variation>
    <location>
        <position position="643"/>
    </location>
</feature>
<feature type="strand" evidence="5">
    <location>
        <begin position="44"/>
        <end position="47"/>
    </location>
</feature>
<feature type="helix" evidence="5">
    <location>
        <begin position="49"/>
        <end position="51"/>
    </location>
</feature>
<feature type="helix" evidence="5">
    <location>
        <begin position="57"/>
        <end position="59"/>
    </location>
</feature>
<feature type="helix" evidence="5">
    <location>
        <begin position="63"/>
        <end position="65"/>
    </location>
</feature>
<feature type="helix" evidence="5">
    <location>
        <begin position="81"/>
        <end position="89"/>
    </location>
</feature>
<feature type="helix" evidence="5">
    <location>
        <begin position="92"/>
        <end position="95"/>
    </location>
</feature>
<feature type="strand" evidence="5">
    <location>
        <begin position="100"/>
        <end position="103"/>
    </location>
</feature>
<feature type="strand" evidence="5">
    <location>
        <begin position="107"/>
        <end position="109"/>
    </location>
</feature>
<feature type="strand" evidence="5">
    <location>
        <begin position="114"/>
        <end position="116"/>
    </location>
</feature>
<feature type="strand" evidence="5">
    <location>
        <begin position="119"/>
        <end position="121"/>
    </location>
</feature>
<feature type="strand" evidence="5">
    <location>
        <begin position="128"/>
        <end position="135"/>
    </location>
</feature>
<feature type="turn" evidence="5">
    <location>
        <begin position="137"/>
        <end position="139"/>
    </location>
</feature>
<feature type="helix" evidence="5">
    <location>
        <begin position="142"/>
        <end position="154"/>
    </location>
</feature>
<feature type="strand" evidence="5">
    <location>
        <begin position="158"/>
        <end position="163"/>
    </location>
</feature>
<feature type="strand" evidence="5">
    <location>
        <begin position="167"/>
        <end position="170"/>
    </location>
</feature>
<feature type="turn" evidence="5">
    <location>
        <begin position="179"/>
        <end position="182"/>
    </location>
</feature>
<feature type="strand" evidence="5">
    <location>
        <begin position="184"/>
        <end position="186"/>
    </location>
</feature>
<feature type="strand" evidence="5">
    <location>
        <begin position="189"/>
        <end position="192"/>
    </location>
</feature>
<feature type="strand" evidence="6">
    <location>
        <begin position="194"/>
        <end position="196"/>
    </location>
</feature>
<feature type="strand" evidence="5">
    <location>
        <begin position="210"/>
        <end position="212"/>
    </location>
</feature>
<feature type="helix" evidence="5">
    <location>
        <begin position="213"/>
        <end position="218"/>
    </location>
</feature>
<feature type="strand" evidence="5">
    <location>
        <begin position="219"/>
        <end position="221"/>
    </location>
</feature>
<feature type="strand" evidence="5">
    <location>
        <begin position="224"/>
        <end position="227"/>
    </location>
</feature>
<feature type="helix" evidence="5">
    <location>
        <begin position="232"/>
        <end position="247"/>
    </location>
</feature>
<feature type="strand" evidence="5">
    <location>
        <begin position="252"/>
        <end position="256"/>
    </location>
</feature>
<feature type="helix" evidence="5">
    <location>
        <begin position="258"/>
        <end position="260"/>
    </location>
</feature>
<feature type="helix" evidence="5">
    <location>
        <begin position="263"/>
        <end position="274"/>
    </location>
</feature>
<feature type="strand" evidence="5">
    <location>
        <begin position="281"/>
        <end position="284"/>
    </location>
</feature>
<feature type="helix" evidence="5">
    <location>
        <begin position="295"/>
        <end position="303"/>
    </location>
</feature>
<feature type="strand" evidence="5">
    <location>
        <begin position="307"/>
        <end position="309"/>
    </location>
</feature>
<feature type="helix" evidence="5">
    <location>
        <begin position="311"/>
        <end position="321"/>
    </location>
</feature>
<feature type="helix" evidence="5">
    <location>
        <begin position="328"/>
        <end position="341"/>
    </location>
</feature>
<feature type="helix" evidence="5">
    <location>
        <begin position="345"/>
        <end position="347"/>
    </location>
</feature>
<feature type="strand" evidence="4">
    <location>
        <begin position="363"/>
        <end position="365"/>
    </location>
</feature>
<feature type="helix" evidence="5">
    <location>
        <begin position="368"/>
        <end position="379"/>
    </location>
</feature>
<feature type="strand" evidence="5">
    <location>
        <begin position="380"/>
        <end position="387"/>
    </location>
</feature>
<feature type="helix" evidence="5">
    <location>
        <begin position="390"/>
        <end position="392"/>
    </location>
</feature>
<feature type="helix" evidence="5">
    <location>
        <begin position="401"/>
        <end position="403"/>
    </location>
</feature>
<feature type="helix" evidence="5">
    <location>
        <begin position="414"/>
        <end position="422"/>
    </location>
</feature>
<feature type="helix" evidence="5">
    <location>
        <begin position="425"/>
        <end position="428"/>
    </location>
</feature>
<feature type="helix" evidence="5">
    <location>
        <begin position="430"/>
        <end position="434"/>
    </location>
</feature>
<feature type="strand" evidence="5">
    <location>
        <begin position="436"/>
        <end position="442"/>
    </location>
</feature>
<feature type="strand" evidence="5">
    <location>
        <begin position="444"/>
        <end position="453"/>
    </location>
</feature>
<feature type="strand" evidence="5">
    <location>
        <begin position="456"/>
        <end position="463"/>
    </location>
</feature>
<feature type="strand" evidence="5">
    <location>
        <begin position="470"/>
        <end position="472"/>
    </location>
</feature>
<feature type="strand" evidence="6">
    <location>
        <begin position="474"/>
        <end position="476"/>
    </location>
</feature>
<feature type="strand" evidence="5">
    <location>
        <begin position="481"/>
        <end position="484"/>
    </location>
</feature>
<feature type="turn" evidence="5">
    <location>
        <begin position="487"/>
        <end position="492"/>
    </location>
</feature>
<feature type="strand" evidence="5">
    <location>
        <begin position="497"/>
        <end position="499"/>
    </location>
</feature>
<feature type="strand" evidence="5">
    <location>
        <begin position="503"/>
        <end position="505"/>
    </location>
</feature>
<feature type="strand" evidence="5">
    <location>
        <begin position="508"/>
        <end position="510"/>
    </location>
</feature>
<feature type="strand" evidence="5">
    <location>
        <begin position="515"/>
        <end position="520"/>
    </location>
</feature>
<feature type="strand" evidence="5">
    <location>
        <begin position="528"/>
        <end position="537"/>
    </location>
</feature>
<feature type="strand" evidence="5">
    <location>
        <begin position="542"/>
        <end position="548"/>
    </location>
</feature>
<feature type="strand" evidence="5">
    <location>
        <begin position="556"/>
        <end position="559"/>
    </location>
</feature>
<feature type="strand" evidence="5">
    <location>
        <begin position="562"/>
        <end position="564"/>
    </location>
</feature>
<feature type="helix" evidence="5">
    <location>
        <begin position="566"/>
        <end position="568"/>
    </location>
</feature>
<feature type="strand" evidence="5">
    <location>
        <begin position="569"/>
        <end position="573"/>
    </location>
</feature>
<feature type="strand" evidence="5">
    <location>
        <begin position="576"/>
        <end position="580"/>
    </location>
</feature>
<feature type="strand" evidence="5">
    <location>
        <begin position="586"/>
        <end position="594"/>
    </location>
</feature>
<feature type="strand" evidence="5">
    <location>
        <begin position="604"/>
        <end position="609"/>
    </location>
</feature>
<feature type="strand" evidence="5">
    <location>
        <begin position="611"/>
        <end position="623"/>
    </location>
</feature>
<feature type="strand" evidence="5">
    <location>
        <begin position="631"/>
        <end position="638"/>
    </location>
</feature>
<feature type="helix" evidence="5">
    <location>
        <begin position="639"/>
        <end position="641"/>
    </location>
</feature>
<feature type="turn" evidence="5">
    <location>
        <begin position="642"/>
        <end position="644"/>
    </location>
</feature>
<feature type="helix" evidence="5">
    <location>
        <begin position="646"/>
        <end position="648"/>
    </location>
</feature>
<feature type="strand" evidence="5">
    <location>
        <begin position="656"/>
        <end position="659"/>
    </location>
</feature>
<feature type="strand" evidence="5">
    <location>
        <begin position="664"/>
        <end position="671"/>
    </location>
</feature>
<feature type="strand" evidence="5">
    <location>
        <begin position="675"/>
        <end position="684"/>
    </location>
</feature>
<feature type="strand" evidence="5">
    <location>
        <begin position="687"/>
        <end position="690"/>
    </location>
</feature>
<feature type="strand" evidence="4">
    <location>
        <begin position="692"/>
        <end position="694"/>
    </location>
</feature>
<feature type="strand" evidence="5">
    <location>
        <begin position="696"/>
        <end position="699"/>
    </location>
</feature>
<feature type="strand" evidence="5">
    <location>
        <begin position="702"/>
        <end position="711"/>
    </location>
</feature>
<name>CDGT1_PAEMA</name>
<comment type="catalytic activity">
    <reaction>
        <text>Cyclizes part of a (1-&gt;4)-alpha-D-glucan chain by formation of a (1-&gt;4)-alpha-D-glucosidic bond.</text>
        <dbReference type="EC" id="2.4.1.19"/>
    </reaction>
</comment>
<comment type="cofactor">
    <cofactor evidence="1">
        <name>Ca(2+)</name>
        <dbReference type="ChEBI" id="CHEBI:29108"/>
    </cofactor>
    <text evidence="1">Binds 2 calcium ions per subunit.</text>
</comment>
<comment type="subunit">
    <text>Monomer.</text>
</comment>
<comment type="subcellular location">
    <subcellularLocation>
        <location evidence="1">Secreted</location>
    </subcellularLocation>
</comment>
<comment type="domain">
    <text>May consist of two protein domains: the one in the N-terminal side cleaves the alpha-1,4-glucosidic bond in starch, and the other in the C-terminal side catalyzes other activities, including the reconstitution of an alpha-1,4-glucosidic linkage for cyclizing the maltooligosaccharide produced.</text>
</comment>
<comment type="similarity">
    <text evidence="3">Belongs to the glycosyl hydrolase 13 family.</text>
</comment>
<dbReference type="EC" id="2.4.1.19"/>
<dbReference type="EMBL" id="X59045">
    <property type="protein sequence ID" value="CAA41773.1"/>
    <property type="molecule type" value="Genomic_DNA"/>
</dbReference>
<dbReference type="EMBL" id="M12777">
    <property type="protein sequence ID" value="AAA22298.1"/>
    <property type="molecule type" value="Genomic_DNA"/>
</dbReference>
<dbReference type="PIR" id="S31281">
    <property type="entry name" value="ALBSGR"/>
</dbReference>
<dbReference type="PDB" id="3WMS">
    <property type="method" value="X-ray"/>
    <property type="resolution" value="2.30 A"/>
    <property type="chains" value="A=28-714"/>
</dbReference>
<dbReference type="PDB" id="4JCL">
    <property type="method" value="X-ray"/>
    <property type="resolution" value="1.70 A"/>
    <property type="chains" value="A=28-714"/>
</dbReference>
<dbReference type="PDB" id="6AIJ">
    <property type="method" value="X-ray"/>
    <property type="resolution" value="2.10 A"/>
    <property type="chains" value="A=27-714"/>
</dbReference>
<dbReference type="PDB" id="6L2H">
    <property type="method" value="X-ray"/>
    <property type="resolution" value="2.10 A"/>
    <property type="chains" value="A=28-714"/>
</dbReference>
<dbReference type="PDBsum" id="3WMS"/>
<dbReference type="PDBsum" id="4JCL"/>
<dbReference type="PDBsum" id="6AIJ"/>
<dbReference type="PDBsum" id="6L2H"/>
<dbReference type="SMR" id="P04830"/>
<dbReference type="STRING" id="44252.DJ90_1132"/>
<dbReference type="CAZy" id="CBM20">
    <property type="family name" value="Carbohydrate-Binding Module Family 20"/>
</dbReference>
<dbReference type="CAZy" id="GH13">
    <property type="family name" value="Glycoside Hydrolase Family 13"/>
</dbReference>
<dbReference type="BRENDA" id="2.4.1.19">
    <property type="organism ID" value="670"/>
</dbReference>
<dbReference type="EvolutionaryTrace" id="P04830"/>
<dbReference type="GO" id="GO:0005576">
    <property type="term" value="C:extracellular region"/>
    <property type="evidence" value="ECO:0007669"/>
    <property type="project" value="UniProtKB-SubCell"/>
</dbReference>
<dbReference type="GO" id="GO:0004556">
    <property type="term" value="F:alpha-amylase activity"/>
    <property type="evidence" value="ECO:0007669"/>
    <property type="project" value="InterPro"/>
</dbReference>
<dbReference type="GO" id="GO:0043895">
    <property type="term" value="F:cyclomaltodextrin glucanotransferase activity"/>
    <property type="evidence" value="ECO:0007669"/>
    <property type="project" value="UniProtKB-EC"/>
</dbReference>
<dbReference type="GO" id="GO:0046872">
    <property type="term" value="F:metal ion binding"/>
    <property type="evidence" value="ECO:0007669"/>
    <property type="project" value="UniProtKB-KW"/>
</dbReference>
<dbReference type="GO" id="GO:2001070">
    <property type="term" value="F:starch binding"/>
    <property type="evidence" value="ECO:0007669"/>
    <property type="project" value="InterPro"/>
</dbReference>
<dbReference type="GO" id="GO:0005975">
    <property type="term" value="P:carbohydrate metabolic process"/>
    <property type="evidence" value="ECO:0007669"/>
    <property type="project" value="InterPro"/>
</dbReference>
<dbReference type="CDD" id="cd11320">
    <property type="entry name" value="AmyAc_AmyMalt_CGTase_like"/>
    <property type="match status" value="1"/>
</dbReference>
<dbReference type="CDD" id="cd00604">
    <property type="entry name" value="IPT_CGTD"/>
    <property type="match status" value="1"/>
</dbReference>
<dbReference type="Gene3D" id="3.20.20.80">
    <property type="entry name" value="Glycosidases"/>
    <property type="match status" value="1"/>
</dbReference>
<dbReference type="Gene3D" id="2.60.40.1180">
    <property type="entry name" value="Golgi alpha-mannosidase II"/>
    <property type="match status" value="1"/>
</dbReference>
<dbReference type="Gene3D" id="2.60.40.10">
    <property type="entry name" value="Immunoglobulins"/>
    <property type="match status" value="2"/>
</dbReference>
<dbReference type="InterPro" id="IPR031319">
    <property type="entry name" value="A-amylase_C"/>
</dbReference>
<dbReference type="InterPro" id="IPR006046">
    <property type="entry name" value="Alpha_amylase"/>
</dbReference>
<dbReference type="InterPro" id="IPR013784">
    <property type="entry name" value="Carb-bd-like_fold"/>
</dbReference>
<dbReference type="InterPro" id="IPR002044">
    <property type="entry name" value="CBM20"/>
</dbReference>
<dbReference type="InterPro" id="IPR006047">
    <property type="entry name" value="Glyco_hydro_13_cat_dom"/>
</dbReference>
<dbReference type="InterPro" id="IPR013780">
    <property type="entry name" value="Glyco_hydro_b"/>
</dbReference>
<dbReference type="InterPro" id="IPR017853">
    <property type="entry name" value="Glycoside_hydrolase_SF"/>
</dbReference>
<dbReference type="InterPro" id="IPR013783">
    <property type="entry name" value="Ig-like_fold"/>
</dbReference>
<dbReference type="InterPro" id="IPR014756">
    <property type="entry name" value="Ig_E-set"/>
</dbReference>
<dbReference type="InterPro" id="IPR002909">
    <property type="entry name" value="IPT_dom"/>
</dbReference>
<dbReference type="PANTHER" id="PTHR10357:SF215">
    <property type="entry name" value="ALPHA-AMYLASE 1"/>
    <property type="match status" value="1"/>
</dbReference>
<dbReference type="PANTHER" id="PTHR10357">
    <property type="entry name" value="ALPHA-AMYLASE FAMILY MEMBER"/>
    <property type="match status" value="1"/>
</dbReference>
<dbReference type="Pfam" id="PF00128">
    <property type="entry name" value="Alpha-amylase"/>
    <property type="match status" value="2"/>
</dbReference>
<dbReference type="Pfam" id="PF00686">
    <property type="entry name" value="CBM_20"/>
    <property type="match status" value="1"/>
</dbReference>
<dbReference type="Pfam" id="PF01833">
    <property type="entry name" value="TIG"/>
    <property type="match status" value="1"/>
</dbReference>
<dbReference type="PRINTS" id="PR00110">
    <property type="entry name" value="ALPHAAMYLASE"/>
</dbReference>
<dbReference type="SMART" id="SM00642">
    <property type="entry name" value="Aamy"/>
    <property type="match status" value="1"/>
</dbReference>
<dbReference type="SMART" id="SM00632">
    <property type="entry name" value="Aamy_C"/>
    <property type="match status" value="1"/>
</dbReference>
<dbReference type="SMART" id="SM01065">
    <property type="entry name" value="CBM_2"/>
    <property type="match status" value="1"/>
</dbReference>
<dbReference type="SUPFAM" id="SSF51445">
    <property type="entry name" value="(Trans)glycosidases"/>
    <property type="match status" value="1"/>
</dbReference>
<dbReference type="SUPFAM" id="SSF81296">
    <property type="entry name" value="E set domains"/>
    <property type="match status" value="1"/>
</dbReference>
<dbReference type="SUPFAM" id="SSF51011">
    <property type="entry name" value="Glycosyl hydrolase domain"/>
    <property type="match status" value="1"/>
</dbReference>
<dbReference type="SUPFAM" id="SSF49452">
    <property type="entry name" value="Starch-binding domain-like"/>
    <property type="match status" value="1"/>
</dbReference>
<dbReference type="PROSITE" id="PS51166">
    <property type="entry name" value="CBM20"/>
    <property type="match status" value="1"/>
</dbReference>
<reference key="1">
    <citation type="journal article" date="1992" name="Appl. Environ. Microbiol.">
        <title>Cyclization characteristics of cyclodextrin glucanotransferase are conferred by the NH2-terminal region of the enzyme.</title>
        <authorList>
            <person name="Fujiwara S."/>
            <person name="Kakihara H."/>
            <person name="Woo K.B."/>
            <person name="Lejeune A."/>
            <person name="Kanemoto M."/>
            <person name="Sakaguchi K."/>
            <person name="Imanaka T."/>
        </authorList>
    </citation>
    <scope>NUCLEOTIDE SEQUENCE [GENOMIC DNA]</scope>
    <source>
        <strain>ATCC 7069 / DSM 1574 / IAM 1243 / JCM 20125 / NBRC 3490 / NRRL B-388</strain>
    </source>
</reference>
<reference key="2">
    <citation type="journal article" date="1986" name="J. Bacteriol.">
        <title>Molecular cloning, DNA nucleotide sequencing, and expression in Bacillus subtilis cells of the Bacillus macerans cyclodextrin glucanotransferase gene.</title>
        <authorList>
            <person name="Takano T."/>
            <person name="Fukuda M."/>
            <person name="Monma M."/>
            <person name="Kobayashi S."/>
            <person name="Kainuma K."/>
            <person name="Yamane K."/>
        </authorList>
    </citation>
    <scope>NUCLEOTIDE SEQUENCE [GENOMIC DNA]</scope>
    <source>
        <strain>ATCC 7069 / DSM 1574 / IAM 1243 / JCM 20125 / NBRC 3490 / NRRL B-388</strain>
    </source>
</reference>
<organism>
    <name type="scientific">Paenibacillus macerans</name>
    <name type="common">Bacillus macerans</name>
    <dbReference type="NCBI Taxonomy" id="44252"/>
    <lineage>
        <taxon>Bacteria</taxon>
        <taxon>Bacillati</taxon>
        <taxon>Bacillota</taxon>
        <taxon>Bacilli</taxon>
        <taxon>Bacillales</taxon>
        <taxon>Paenibacillaceae</taxon>
        <taxon>Paenibacillus</taxon>
    </lineage>
</organism>
<accession>P04830</accession>
<evidence type="ECO:0000250" key="1"/>
<evidence type="ECO:0000255" key="2">
    <source>
        <dbReference type="PROSITE-ProRule" id="PRU00594"/>
    </source>
</evidence>
<evidence type="ECO:0000305" key="3"/>
<evidence type="ECO:0007829" key="4">
    <source>
        <dbReference type="PDB" id="3WMS"/>
    </source>
</evidence>
<evidence type="ECO:0007829" key="5">
    <source>
        <dbReference type="PDB" id="4JCL"/>
    </source>
</evidence>
<evidence type="ECO:0007829" key="6">
    <source>
        <dbReference type="PDB" id="6AIJ"/>
    </source>
</evidence>
<keyword id="KW-0002">3D-structure</keyword>
<keyword id="KW-0106">Calcium</keyword>
<keyword id="KW-0328">Glycosyltransferase</keyword>
<keyword id="KW-0479">Metal-binding</keyword>
<keyword id="KW-0964">Secreted</keyword>
<keyword id="KW-0732">Signal</keyword>
<keyword id="KW-0808">Transferase</keyword>
<proteinExistence type="evidence at protein level"/>
<gene>
    <name type="primary">cgtM</name>
</gene>